<evidence type="ECO:0000255" key="1">
    <source>
        <dbReference type="HAMAP-Rule" id="MF_01220"/>
    </source>
</evidence>
<proteinExistence type="inferred from homology"/>
<organism>
    <name type="scientific">Leptospira interrogans serogroup Icterohaemorrhagiae serovar copenhageni (strain Fiocruz L1-130)</name>
    <dbReference type="NCBI Taxonomy" id="267671"/>
    <lineage>
        <taxon>Bacteria</taxon>
        <taxon>Pseudomonadati</taxon>
        <taxon>Spirochaetota</taxon>
        <taxon>Spirochaetia</taxon>
        <taxon>Leptospirales</taxon>
        <taxon>Leptospiraceae</taxon>
        <taxon>Leptospira</taxon>
    </lineage>
</organism>
<accession>Q72U12</accession>
<comment type="function">
    <text evidence="1">Catalyzes the reversible phosphorylation of UMP to UDP.</text>
</comment>
<comment type="catalytic activity">
    <reaction evidence="1">
        <text>UMP + ATP = UDP + ADP</text>
        <dbReference type="Rhea" id="RHEA:24400"/>
        <dbReference type="ChEBI" id="CHEBI:30616"/>
        <dbReference type="ChEBI" id="CHEBI:57865"/>
        <dbReference type="ChEBI" id="CHEBI:58223"/>
        <dbReference type="ChEBI" id="CHEBI:456216"/>
        <dbReference type="EC" id="2.7.4.22"/>
    </reaction>
</comment>
<comment type="activity regulation">
    <text evidence="1">Inhibited by UTP.</text>
</comment>
<comment type="pathway">
    <text evidence="1">Pyrimidine metabolism; CTP biosynthesis via de novo pathway; UDP from UMP (UMPK route): step 1/1.</text>
</comment>
<comment type="subunit">
    <text evidence="1">Homohexamer.</text>
</comment>
<comment type="subcellular location">
    <subcellularLocation>
        <location evidence="1">Cytoplasm</location>
    </subcellularLocation>
</comment>
<comment type="similarity">
    <text evidence="1">Belongs to the UMP kinase family.</text>
</comment>
<gene>
    <name evidence="1" type="primary">pyrH</name>
    <name type="ordered locus">LIC_10852</name>
</gene>
<dbReference type="EC" id="2.7.4.22" evidence="1"/>
<dbReference type="EMBL" id="AE016823">
    <property type="protein sequence ID" value="AAS69466.1"/>
    <property type="molecule type" value="Genomic_DNA"/>
</dbReference>
<dbReference type="RefSeq" id="WP_000179852.1">
    <property type="nucleotide sequence ID" value="NC_005823.1"/>
</dbReference>
<dbReference type="SMR" id="Q72U12"/>
<dbReference type="GeneID" id="61144184"/>
<dbReference type="KEGG" id="lic:LIC_10852"/>
<dbReference type="HOGENOM" id="CLU_033861_0_0_12"/>
<dbReference type="UniPathway" id="UPA00159">
    <property type="reaction ID" value="UER00275"/>
</dbReference>
<dbReference type="Proteomes" id="UP000007037">
    <property type="component" value="Chromosome I"/>
</dbReference>
<dbReference type="GO" id="GO:0005737">
    <property type="term" value="C:cytoplasm"/>
    <property type="evidence" value="ECO:0007669"/>
    <property type="project" value="UniProtKB-SubCell"/>
</dbReference>
<dbReference type="GO" id="GO:0005524">
    <property type="term" value="F:ATP binding"/>
    <property type="evidence" value="ECO:0007669"/>
    <property type="project" value="UniProtKB-KW"/>
</dbReference>
<dbReference type="GO" id="GO:0033862">
    <property type="term" value="F:UMP kinase activity"/>
    <property type="evidence" value="ECO:0007669"/>
    <property type="project" value="UniProtKB-EC"/>
</dbReference>
<dbReference type="GO" id="GO:0044210">
    <property type="term" value="P:'de novo' CTP biosynthetic process"/>
    <property type="evidence" value="ECO:0007669"/>
    <property type="project" value="UniProtKB-UniRule"/>
</dbReference>
<dbReference type="GO" id="GO:0006225">
    <property type="term" value="P:UDP biosynthetic process"/>
    <property type="evidence" value="ECO:0007669"/>
    <property type="project" value="TreeGrafter"/>
</dbReference>
<dbReference type="CDD" id="cd04254">
    <property type="entry name" value="AAK_UMPK-PyrH-Ec"/>
    <property type="match status" value="1"/>
</dbReference>
<dbReference type="FunFam" id="3.40.1160.10:FF:000001">
    <property type="entry name" value="Uridylate kinase"/>
    <property type="match status" value="1"/>
</dbReference>
<dbReference type="Gene3D" id="3.40.1160.10">
    <property type="entry name" value="Acetylglutamate kinase-like"/>
    <property type="match status" value="1"/>
</dbReference>
<dbReference type="HAMAP" id="MF_01220_B">
    <property type="entry name" value="PyrH_B"/>
    <property type="match status" value="1"/>
</dbReference>
<dbReference type="InterPro" id="IPR036393">
    <property type="entry name" value="AceGlu_kinase-like_sf"/>
</dbReference>
<dbReference type="InterPro" id="IPR001048">
    <property type="entry name" value="Asp/Glu/Uridylate_kinase"/>
</dbReference>
<dbReference type="InterPro" id="IPR011817">
    <property type="entry name" value="Uridylate_kinase"/>
</dbReference>
<dbReference type="InterPro" id="IPR015963">
    <property type="entry name" value="Uridylate_kinase_bac"/>
</dbReference>
<dbReference type="NCBIfam" id="TIGR02075">
    <property type="entry name" value="pyrH_bact"/>
    <property type="match status" value="1"/>
</dbReference>
<dbReference type="PANTHER" id="PTHR42833">
    <property type="entry name" value="URIDYLATE KINASE"/>
    <property type="match status" value="1"/>
</dbReference>
<dbReference type="PANTHER" id="PTHR42833:SF4">
    <property type="entry name" value="URIDYLATE KINASE PUMPKIN, CHLOROPLASTIC"/>
    <property type="match status" value="1"/>
</dbReference>
<dbReference type="Pfam" id="PF00696">
    <property type="entry name" value="AA_kinase"/>
    <property type="match status" value="1"/>
</dbReference>
<dbReference type="PIRSF" id="PIRSF005650">
    <property type="entry name" value="Uridylate_kin"/>
    <property type="match status" value="1"/>
</dbReference>
<dbReference type="SUPFAM" id="SSF53633">
    <property type="entry name" value="Carbamate kinase-like"/>
    <property type="match status" value="1"/>
</dbReference>
<name>PYRH_LEPIC</name>
<keyword id="KW-0067">ATP-binding</keyword>
<keyword id="KW-0963">Cytoplasm</keyword>
<keyword id="KW-0418">Kinase</keyword>
<keyword id="KW-0547">Nucleotide-binding</keyword>
<keyword id="KW-0665">Pyrimidine biosynthesis</keyword>
<keyword id="KW-0808">Transferase</keyword>
<sequence>MATEAKYNRILIKLSGEALAGEGEFGIDTNKAHSLAEEIKEVHDLGVEIALVVGGGNIIRGTNLAKAGIDRATADYMGMLATIQNALALQDACEKKGLYTRVQSAIEINSIAESYIRRRAVRHLEKRRIVIFAGGTGNPYFTTDTTASLRAVEVGCDVILKATKVDGVYTADPKKDNGAKRYSQISFMESINRRLKVMDSTALSLCMENNMSIIVFDIFKRGNLKDLVTGKNIGTLISNSEDIQIDGK</sequence>
<reference key="1">
    <citation type="journal article" date="2004" name="J. Bacteriol.">
        <title>Comparative genomics of two Leptospira interrogans serovars reveals novel insights into physiology and pathogenesis.</title>
        <authorList>
            <person name="Nascimento A.L.T.O."/>
            <person name="Ko A.I."/>
            <person name="Martins E.A.L."/>
            <person name="Monteiro-Vitorello C.B."/>
            <person name="Ho P.L."/>
            <person name="Haake D.A."/>
            <person name="Verjovski-Almeida S."/>
            <person name="Hartskeerl R.A."/>
            <person name="Marques M.V."/>
            <person name="Oliveira M.C."/>
            <person name="Menck C.F.M."/>
            <person name="Leite L.C.C."/>
            <person name="Carrer H."/>
            <person name="Coutinho L.L."/>
            <person name="Degrave W.M."/>
            <person name="Dellagostin O.A."/>
            <person name="El-Dorry H."/>
            <person name="Ferro E.S."/>
            <person name="Ferro M.I.T."/>
            <person name="Furlan L.R."/>
            <person name="Gamberini M."/>
            <person name="Giglioti E.A."/>
            <person name="Goes-Neto A."/>
            <person name="Goldman G.H."/>
            <person name="Goldman M.H.S."/>
            <person name="Harakava R."/>
            <person name="Jeronimo S.M.B."/>
            <person name="Junqueira-de-Azevedo I.L.M."/>
            <person name="Kimura E.T."/>
            <person name="Kuramae E.E."/>
            <person name="Lemos E.G.M."/>
            <person name="Lemos M.V.F."/>
            <person name="Marino C.L."/>
            <person name="Nunes L.R."/>
            <person name="de Oliveira R.C."/>
            <person name="Pereira G.G."/>
            <person name="Reis M.S."/>
            <person name="Schriefer A."/>
            <person name="Siqueira W.J."/>
            <person name="Sommer P."/>
            <person name="Tsai S.M."/>
            <person name="Simpson A.J.G."/>
            <person name="Ferro J.A."/>
            <person name="Camargo L.E.A."/>
            <person name="Kitajima J.P."/>
            <person name="Setubal J.C."/>
            <person name="Van Sluys M.A."/>
        </authorList>
    </citation>
    <scope>NUCLEOTIDE SEQUENCE [LARGE SCALE GENOMIC DNA]</scope>
    <source>
        <strain>Fiocruz L1-130</strain>
    </source>
</reference>
<protein>
    <recommendedName>
        <fullName evidence="1">Uridylate kinase</fullName>
        <shortName evidence="1">UK</shortName>
        <ecNumber evidence="1">2.7.4.22</ecNumber>
    </recommendedName>
    <alternativeName>
        <fullName evidence="1">Uridine monophosphate kinase</fullName>
        <shortName evidence="1">UMP kinase</shortName>
        <shortName evidence="1">UMPK</shortName>
    </alternativeName>
</protein>
<feature type="chain" id="PRO_0000143854" description="Uridylate kinase">
    <location>
        <begin position="1"/>
        <end position="248"/>
    </location>
</feature>
<feature type="binding site" evidence="1">
    <location>
        <begin position="13"/>
        <end position="16"/>
    </location>
    <ligand>
        <name>ATP</name>
        <dbReference type="ChEBI" id="CHEBI:30616"/>
    </ligand>
</feature>
<feature type="binding site" evidence="1">
    <location>
        <position position="55"/>
    </location>
    <ligand>
        <name>UMP</name>
        <dbReference type="ChEBI" id="CHEBI:57865"/>
    </ligand>
</feature>
<feature type="binding site" evidence="1">
    <location>
        <position position="56"/>
    </location>
    <ligand>
        <name>ATP</name>
        <dbReference type="ChEBI" id="CHEBI:30616"/>
    </ligand>
</feature>
<feature type="binding site" evidence="1">
    <location>
        <position position="60"/>
    </location>
    <ligand>
        <name>ATP</name>
        <dbReference type="ChEBI" id="CHEBI:30616"/>
    </ligand>
</feature>
<feature type="binding site" evidence="1">
    <location>
        <position position="75"/>
    </location>
    <ligand>
        <name>UMP</name>
        <dbReference type="ChEBI" id="CHEBI:57865"/>
    </ligand>
</feature>
<feature type="binding site" evidence="1">
    <location>
        <begin position="136"/>
        <end position="143"/>
    </location>
    <ligand>
        <name>UMP</name>
        <dbReference type="ChEBI" id="CHEBI:57865"/>
    </ligand>
</feature>
<feature type="binding site" evidence="1">
    <location>
        <position position="163"/>
    </location>
    <ligand>
        <name>ATP</name>
        <dbReference type="ChEBI" id="CHEBI:30616"/>
    </ligand>
</feature>
<feature type="binding site" evidence="1">
    <location>
        <position position="169"/>
    </location>
    <ligand>
        <name>ATP</name>
        <dbReference type="ChEBI" id="CHEBI:30616"/>
    </ligand>
</feature>
<feature type="binding site" evidence="1">
    <location>
        <position position="172"/>
    </location>
    <ligand>
        <name>ATP</name>
        <dbReference type="ChEBI" id="CHEBI:30616"/>
    </ligand>
</feature>